<reference key="1">
    <citation type="journal article" date="2009" name="Genome Res.">
        <title>Whole genome sequence of Desulfovibrio magneticus strain RS-1 revealed common gene clusters in magnetotactic bacteria.</title>
        <authorList>
            <person name="Nakazawa H."/>
            <person name="Arakaki A."/>
            <person name="Narita-Yamada S."/>
            <person name="Yashiro I."/>
            <person name="Jinno K."/>
            <person name="Aoki N."/>
            <person name="Tsuruyama A."/>
            <person name="Okamura Y."/>
            <person name="Tanikawa S."/>
            <person name="Fujita N."/>
            <person name="Takeyama H."/>
            <person name="Matsunaga T."/>
        </authorList>
    </citation>
    <scope>NUCLEOTIDE SEQUENCE [LARGE SCALE GENOMIC DNA]</scope>
    <source>
        <strain>ATCC 700980 / DSM 13731 / RS-1</strain>
    </source>
</reference>
<protein>
    <recommendedName>
        <fullName evidence="1">Aspartyl/glutamyl-tRNA(Asn/Gln) amidotransferase subunit B</fullName>
        <shortName evidence="1">Asp/Glu-ADT subunit B</shortName>
        <ecNumber evidence="1">6.3.5.-</ecNumber>
    </recommendedName>
</protein>
<dbReference type="EC" id="6.3.5.-" evidence="1"/>
<dbReference type="EMBL" id="AP010904">
    <property type="protein sequence ID" value="BAH76631.1"/>
    <property type="molecule type" value="Genomic_DNA"/>
</dbReference>
<dbReference type="RefSeq" id="WP_015861785.1">
    <property type="nucleotide sequence ID" value="NC_012796.1"/>
</dbReference>
<dbReference type="SMR" id="C4XIR3"/>
<dbReference type="STRING" id="573370.DMR_31400"/>
<dbReference type="KEGG" id="dma:DMR_31400"/>
<dbReference type="eggNOG" id="COG0064">
    <property type="taxonomic scope" value="Bacteria"/>
</dbReference>
<dbReference type="HOGENOM" id="CLU_019240_0_0_7"/>
<dbReference type="OrthoDB" id="9804078at2"/>
<dbReference type="Proteomes" id="UP000009071">
    <property type="component" value="Chromosome"/>
</dbReference>
<dbReference type="GO" id="GO:0050566">
    <property type="term" value="F:asparaginyl-tRNA synthase (glutamine-hydrolyzing) activity"/>
    <property type="evidence" value="ECO:0007669"/>
    <property type="project" value="RHEA"/>
</dbReference>
<dbReference type="GO" id="GO:0005524">
    <property type="term" value="F:ATP binding"/>
    <property type="evidence" value="ECO:0007669"/>
    <property type="project" value="UniProtKB-KW"/>
</dbReference>
<dbReference type="GO" id="GO:0050567">
    <property type="term" value="F:glutaminyl-tRNA synthase (glutamine-hydrolyzing) activity"/>
    <property type="evidence" value="ECO:0007669"/>
    <property type="project" value="UniProtKB-UniRule"/>
</dbReference>
<dbReference type="GO" id="GO:0070681">
    <property type="term" value="P:glutaminyl-tRNAGln biosynthesis via transamidation"/>
    <property type="evidence" value="ECO:0007669"/>
    <property type="project" value="TreeGrafter"/>
</dbReference>
<dbReference type="GO" id="GO:0006412">
    <property type="term" value="P:translation"/>
    <property type="evidence" value="ECO:0007669"/>
    <property type="project" value="UniProtKB-UniRule"/>
</dbReference>
<dbReference type="FunFam" id="1.10.10.410:FF:000001">
    <property type="entry name" value="Aspartyl/glutamyl-tRNA(Asn/Gln) amidotransferase subunit B"/>
    <property type="match status" value="1"/>
</dbReference>
<dbReference type="FunFam" id="1.10.150.380:FF:000001">
    <property type="entry name" value="Aspartyl/glutamyl-tRNA(Asn/Gln) amidotransferase subunit B"/>
    <property type="match status" value="1"/>
</dbReference>
<dbReference type="Gene3D" id="1.10.10.410">
    <property type="match status" value="1"/>
</dbReference>
<dbReference type="Gene3D" id="1.10.150.380">
    <property type="entry name" value="GatB domain, N-terminal subdomain"/>
    <property type="match status" value="1"/>
</dbReference>
<dbReference type="HAMAP" id="MF_00121">
    <property type="entry name" value="GatB"/>
    <property type="match status" value="1"/>
</dbReference>
<dbReference type="InterPro" id="IPR017959">
    <property type="entry name" value="Asn/Gln-tRNA_amidoTrfase_suB/E"/>
</dbReference>
<dbReference type="InterPro" id="IPR006075">
    <property type="entry name" value="Asn/Gln-tRNA_Trfase_suB/E_cat"/>
</dbReference>
<dbReference type="InterPro" id="IPR018027">
    <property type="entry name" value="Asn/Gln_amidotransferase"/>
</dbReference>
<dbReference type="InterPro" id="IPR003789">
    <property type="entry name" value="Asn/Gln_tRNA_amidoTrase-B-like"/>
</dbReference>
<dbReference type="InterPro" id="IPR004413">
    <property type="entry name" value="GatB"/>
</dbReference>
<dbReference type="InterPro" id="IPR042114">
    <property type="entry name" value="GatB_C_1"/>
</dbReference>
<dbReference type="InterPro" id="IPR023168">
    <property type="entry name" value="GatB_Yqey_C_2"/>
</dbReference>
<dbReference type="InterPro" id="IPR017958">
    <property type="entry name" value="Gln-tRNA_amidoTrfase_suB_CS"/>
</dbReference>
<dbReference type="InterPro" id="IPR014746">
    <property type="entry name" value="Gln_synth/guanido_kin_cat_dom"/>
</dbReference>
<dbReference type="NCBIfam" id="TIGR00133">
    <property type="entry name" value="gatB"/>
    <property type="match status" value="1"/>
</dbReference>
<dbReference type="NCBIfam" id="NF004012">
    <property type="entry name" value="PRK05477.1-2"/>
    <property type="match status" value="1"/>
</dbReference>
<dbReference type="NCBIfam" id="NF004014">
    <property type="entry name" value="PRK05477.1-4"/>
    <property type="match status" value="1"/>
</dbReference>
<dbReference type="NCBIfam" id="NF004015">
    <property type="entry name" value="PRK05477.1-5"/>
    <property type="match status" value="1"/>
</dbReference>
<dbReference type="PANTHER" id="PTHR11659">
    <property type="entry name" value="GLUTAMYL-TRNA GLN AMIDOTRANSFERASE SUBUNIT B MITOCHONDRIAL AND PROKARYOTIC PET112-RELATED"/>
    <property type="match status" value="1"/>
</dbReference>
<dbReference type="PANTHER" id="PTHR11659:SF0">
    <property type="entry name" value="GLUTAMYL-TRNA(GLN) AMIDOTRANSFERASE SUBUNIT B, MITOCHONDRIAL"/>
    <property type="match status" value="1"/>
</dbReference>
<dbReference type="Pfam" id="PF02934">
    <property type="entry name" value="GatB_N"/>
    <property type="match status" value="1"/>
</dbReference>
<dbReference type="Pfam" id="PF02637">
    <property type="entry name" value="GatB_Yqey"/>
    <property type="match status" value="1"/>
</dbReference>
<dbReference type="SMART" id="SM00845">
    <property type="entry name" value="GatB_Yqey"/>
    <property type="match status" value="1"/>
</dbReference>
<dbReference type="SUPFAM" id="SSF89095">
    <property type="entry name" value="GatB/YqeY motif"/>
    <property type="match status" value="1"/>
</dbReference>
<dbReference type="SUPFAM" id="SSF55931">
    <property type="entry name" value="Glutamine synthetase/guanido kinase"/>
    <property type="match status" value="1"/>
</dbReference>
<dbReference type="PROSITE" id="PS01234">
    <property type="entry name" value="GATB"/>
    <property type="match status" value="1"/>
</dbReference>
<keyword id="KW-0067">ATP-binding</keyword>
<keyword id="KW-0436">Ligase</keyword>
<keyword id="KW-0547">Nucleotide-binding</keyword>
<keyword id="KW-0648">Protein biosynthesis</keyword>
<proteinExistence type="inferred from homology"/>
<name>GATB_SOLM1</name>
<sequence length="476" mass="52154">MARYETVIGVEVHAQLKTKSKIFCSCSTRFGVDPNENVCPVCSGMPGVLPVLNATVVEYAAKMGLATGCVVNPVSVFARKNYFYPDLPKGYQTSQFEQPICEHGHVDITVDGTAKRIGITRIHMEEDAGKNIHSAADNLSYVDLNRACVPLIEIVSEPDMRGPEEVVAYLKALRAILVYLDVCDGNMEEGSFRCDANVSLRPVGQAEFGTRAELKNLNSFRHVQKAIEYEVERQADILDDGGKVIQETRLYDAAKNTTASMRGKEEAHDYRYFPDPDLVPVRIEAATLDKWRAELPELPEARRARFVADFGLSDYDAEVLTAERDMAEYFEAAVAAGADPKKAANWMQSELLRELNQAGVAARDAKLTPEKLASLVKLIDSGEISGKIAKQIFPDLFAQGLDPADYVRQKGLSQISDSNALESAVEAVLAANPAEVEAFRGGKTKLMGFFVGQIMKATKGQANPGLVNELLQKKLG</sequence>
<feature type="chain" id="PRO_1000203051" description="Aspartyl/glutamyl-tRNA(Asn/Gln) amidotransferase subunit B">
    <location>
        <begin position="1"/>
        <end position="476"/>
    </location>
</feature>
<organism>
    <name type="scientific">Solidesulfovibrio magneticus (strain ATCC 700980 / DSM 13731 / RS-1)</name>
    <name type="common">Desulfovibrio magneticus</name>
    <dbReference type="NCBI Taxonomy" id="573370"/>
    <lineage>
        <taxon>Bacteria</taxon>
        <taxon>Pseudomonadati</taxon>
        <taxon>Thermodesulfobacteriota</taxon>
        <taxon>Desulfovibrionia</taxon>
        <taxon>Desulfovibrionales</taxon>
        <taxon>Desulfovibrionaceae</taxon>
        <taxon>Solidesulfovibrio</taxon>
    </lineage>
</organism>
<gene>
    <name evidence="1" type="primary">gatB</name>
    <name type="ordered locus">DMR_31400</name>
</gene>
<comment type="function">
    <text evidence="1">Allows the formation of correctly charged Asn-tRNA(Asn) or Gln-tRNA(Gln) through the transamidation of misacylated Asp-tRNA(Asn) or Glu-tRNA(Gln) in organisms which lack either or both of asparaginyl-tRNA or glutaminyl-tRNA synthetases. The reaction takes place in the presence of glutamine and ATP through an activated phospho-Asp-tRNA(Asn) or phospho-Glu-tRNA(Gln).</text>
</comment>
<comment type="catalytic activity">
    <reaction evidence="1">
        <text>L-glutamyl-tRNA(Gln) + L-glutamine + ATP + H2O = L-glutaminyl-tRNA(Gln) + L-glutamate + ADP + phosphate + H(+)</text>
        <dbReference type="Rhea" id="RHEA:17521"/>
        <dbReference type="Rhea" id="RHEA-COMP:9681"/>
        <dbReference type="Rhea" id="RHEA-COMP:9684"/>
        <dbReference type="ChEBI" id="CHEBI:15377"/>
        <dbReference type="ChEBI" id="CHEBI:15378"/>
        <dbReference type="ChEBI" id="CHEBI:29985"/>
        <dbReference type="ChEBI" id="CHEBI:30616"/>
        <dbReference type="ChEBI" id="CHEBI:43474"/>
        <dbReference type="ChEBI" id="CHEBI:58359"/>
        <dbReference type="ChEBI" id="CHEBI:78520"/>
        <dbReference type="ChEBI" id="CHEBI:78521"/>
        <dbReference type="ChEBI" id="CHEBI:456216"/>
    </reaction>
</comment>
<comment type="catalytic activity">
    <reaction evidence="1">
        <text>L-aspartyl-tRNA(Asn) + L-glutamine + ATP + H2O = L-asparaginyl-tRNA(Asn) + L-glutamate + ADP + phosphate + 2 H(+)</text>
        <dbReference type="Rhea" id="RHEA:14513"/>
        <dbReference type="Rhea" id="RHEA-COMP:9674"/>
        <dbReference type="Rhea" id="RHEA-COMP:9677"/>
        <dbReference type="ChEBI" id="CHEBI:15377"/>
        <dbReference type="ChEBI" id="CHEBI:15378"/>
        <dbReference type="ChEBI" id="CHEBI:29985"/>
        <dbReference type="ChEBI" id="CHEBI:30616"/>
        <dbReference type="ChEBI" id="CHEBI:43474"/>
        <dbReference type="ChEBI" id="CHEBI:58359"/>
        <dbReference type="ChEBI" id="CHEBI:78515"/>
        <dbReference type="ChEBI" id="CHEBI:78516"/>
        <dbReference type="ChEBI" id="CHEBI:456216"/>
    </reaction>
</comment>
<comment type="subunit">
    <text evidence="1">Heterotrimer of A, B and C subunits.</text>
</comment>
<comment type="similarity">
    <text evidence="1">Belongs to the GatB/GatE family. GatB subfamily.</text>
</comment>
<accession>C4XIR3</accession>
<evidence type="ECO:0000255" key="1">
    <source>
        <dbReference type="HAMAP-Rule" id="MF_00121"/>
    </source>
</evidence>